<accession>P20301</accession>
<protein>
    <recommendedName>
        <fullName>Antigenic protein NP1</fullName>
    </recommendedName>
    <alternativeName>
        <fullName>Non-pathogenic protein 1</fullName>
    </alternativeName>
</protein>
<proteinExistence type="predicted"/>
<sequence>VQVSIGKCNHNPSDQWLDNISRWSNDRMPIDSIGIDLGLQTTQPYSINDTFKIGSPIGGMIYLRFDTTFTNSFYVTFYNVGRASIINYNITMNEEWNSVLKNAPGNVAEIRTPGNRLVFTSRHIRNLEDAQYISDYWLKAISISNYAVTLENIPITLNFDQRVDAGAAVAFVDRWFTQHPSDWASGCVNKEGLINSGNWGPLHEMNHHMQGPYLRGGNWGIKEPGEETNNVMTSINYILYTNIAGHRNQGLSGWNYVSDGYSTIYKILNGENDQPHLRSYVNIAHAFGTDTLIALVKSYYGLWYENNYEGEYSIKRDSTSAFCLLAAIATKRDTRYLCSLFKYDIQQNVSEAIKNMNYPTYYPFFNVYAMSYNGNYYGRTYKIPYGTTRLNFTATTAIDPSATSVSYTIKSGLTKGKLEQVEENVYDYTPNFGADENDTFVLNIDCIVNGEKVHIEQDGTFELDPHQVEYEVYKDVKTKDMEQALNTIQNKTSNYTGTSTFFDIGNYDDGTMQSMLVEKGKLIVPTSGYYTLFMKADDLGRLLLNVNGEYEQLLNVKTYLGGYSKTINGTYATVKLEKDTEYPFILYNLNTGGQGFIRIGYCYQGTDQSSVNVSKCSVLDIGSSMILNEKVKAGAKEPEF</sequence>
<reference key="1">
    <citation type="journal article" date="1989" name="Proc. Natl. Acad. Sci. U.S.A.">
        <title>Genomic DNA differences between pathogenic and nonpathogenic Entamoeba histolytica.</title>
        <authorList>
            <person name="Tannich E."/>
            <person name="Horstmann R.D."/>
            <person name="Knobloch J."/>
            <person name="Arnold H.H."/>
        </authorList>
    </citation>
    <scope>NUCLEOTIDE SEQUENCE</scope>
    <source>
        <strain>SAW 1734</strain>
    </source>
</reference>
<feature type="chain" id="PRO_0000064642" description="Antigenic protein NP1">
    <location>
        <begin position="1" status="less than"/>
        <end position="640"/>
    </location>
</feature>
<feature type="domain" description="Peptidase M60" evidence="1">
    <location>
        <begin position="1" status="less than"/>
        <end position="288"/>
    </location>
</feature>
<feature type="domain" description="PA14" evidence="2">
    <location>
        <begin position="463"/>
        <end position="615"/>
    </location>
</feature>
<feature type="non-terminal residue">
    <location>
        <position position="1"/>
    </location>
</feature>
<dbReference type="PIR" id="B32935">
    <property type="entry name" value="B32935"/>
</dbReference>
<dbReference type="VEuPathDB" id="AmoebaDB:EHI5A_021930"/>
<dbReference type="VEuPathDB" id="AmoebaDB:EHI7A_061750"/>
<dbReference type="VEuPathDB" id="AmoebaDB:EHI8A_065260"/>
<dbReference type="VEuPathDB" id="AmoebaDB:EHI_015380"/>
<dbReference type="VEuPathDB" id="AmoebaDB:KM1_119400"/>
<dbReference type="Gene3D" id="3.40.390.80">
    <property type="entry name" value="Peptidase M60, enhancin-like domain 2"/>
    <property type="match status" value="1"/>
</dbReference>
<dbReference type="InterPro" id="IPR037524">
    <property type="entry name" value="PA14/GLEYA"/>
</dbReference>
<dbReference type="InterPro" id="IPR031161">
    <property type="entry name" value="Peptidase_M60_dom"/>
</dbReference>
<dbReference type="InterPro" id="IPR051244">
    <property type="entry name" value="TCAF"/>
</dbReference>
<dbReference type="PANTHER" id="PTHR15730">
    <property type="entry name" value="EXPERIMENTAL AUTOIMMUNE PROSTATITIS ANTIGEN 2-RELATED"/>
    <property type="match status" value="1"/>
</dbReference>
<dbReference type="PANTHER" id="PTHR15730:SF5">
    <property type="entry name" value="SI:CH211-210B2.2-RELATED"/>
    <property type="match status" value="1"/>
</dbReference>
<dbReference type="Pfam" id="PF13402">
    <property type="entry name" value="Peptidase_M60"/>
    <property type="match status" value="1"/>
</dbReference>
<dbReference type="SMART" id="SM01276">
    <property type="entry name" value="M60-like"/>
    <property type="match status" value="1"/>
</dbReference>
<dbReference type="PROSITE" id="PS51820">
    <property type="entry name" value="PA14"/>
    <property type="match status" value="1"/>
</dbReference>
<dbReference type="PROSITE" id="PS51723">
    <property type="entry name" value="PEPTIDASE_M60"/>
    <property type="match status" value="1"/>
</dbReference>
<organism>
    <name type="scientific">Entamoeba histolytica</name>
    <dbReference type="NCBI Taxonomy" id="5759"/>
    <lineage>
        <taxon>Eukaryota</taxon>
        <taxon>Amoebozoa</taxon>
        <taxon>Evosea</taxon>
        <taxon>Archamoebae</taxon>
        <taxon>Mastigamoebida</taxon>
        <taxon>Entamoebidae</taxon>
        <taxon>Entamoeba</taxon>
    </lineage>
</organism>
<name>APRN_ENTHI</name>
<evidence type="ECO:0000255" key="1">
    <source>
        <dbReference type="PROSITE-ProRule" id="PRU01060"/>
    </source>
</evidence>
<evidence type="ECO:0000255" key="2">
    <source>
        <dbReference type="PROSITE-ProRule" id="PRU01164"/>
    </source>
</evidence>